<keyword id="KW-0903">Direct protein sequencing</keyword>
<keyword id="KW-1267">Proteomics identification</keyword>
<keyword id="KW-1185">Reference proteome</keyword>
<keyword id="KW-0810">Translation regulation</keyword>
<protein>
    <recommendedName>
        <fullName evidence="5">SCRIB overlapping open reading frame protein</fullName>
        <shortName evidence="3">oSCRIB</shortName>
    </recommendedName>
</protein>
<name>OSCRI_HUMAN</name>
<accession>C0HLS1</accession>
<organism>
    <name type="scientific">Homo sapiens</name>
    <name type="common">Human</name>
    <dbReference type="NCBI Taxonomy" id="9606"/>
    <lineage>
        <taxon>Eukaryota</taxon>
        <taxon>Metazoa</taxon>
        <taxon>Chordata</taxon>
        <taxon>Craniata</taxon>
        <taxon>Vertebrata</taxon>
        <taxon>Euteleostomi</taxon>
        <taxon>Mammalia</taxon>
        <taxon>Eutheria</taxon>
        <taxon>Euarchontoglires</taxon>
        <taxon>Primates</taxon>
        <taxon>Haplorrhini</taxon>
        <taxon>Catarrhini</taxon>
        <taxon>Hominidae</taxon>
        <taxon>Homo</taxon>
    </lineage>
</organism>
<comment type="function">
    <text evidence="2">Represses translation of the downstream SCRIB protein (PubMed:34535749). Translation of oSCRIB hinders SCRIB translation but does not completely abolish it, probably due to leaky scanning which allows the ribosome to bypass the weaker oSCRIB start codon and initiate translation at the stronger SCRIB start codon (PubMed:34535749).</text>
</comment>
<comment type="interaction">
    <interactant intactId="EBI-52315133">
        <id>C0HLS1</id>
    </interactant>
    <interactant intactId="EBI-540834">
        <id>P61964</id>
        <label>WDR5</label>
    </interactant>
    <organismsDiffer>false</organismsDiffer>
    <experiments>6</experiments>
</comment>
<comment type="miscellaneous">
    <text evidence="2">This protein is produced by a polycistronic gene which also produces the tumor suppressor gene SCRIB from an overlapping reading frame.</text>
</comment>
<evidence type="ECO:0000256" key="1">
    <source>
        <dbReference type="SAM" id="MobiDB-lite"/>
    </source>
</evidence>
<evidence type="ECO:0000269" key="2">
    <source>
    </source>
</evidence>
<evidence type="ECO:0000303" key="3">
    <source>
    </source>
</evidence>
<evidence type="ECO:0000305" key="4"/>
<evidence type="ECO:0000305" key="5">
    <source>
    </source>
</evidence>
<reference evidence="4" key="1">
    <citation type="journal article" date="2006" name="Nature">
        <title>DNA sequence and analysis of human chromosome 8.</title>
        <authorList>
            <person name="Nusbaum C."/>
            <person name="Mikkelsen T.S."/>
            <person name="Zody M.C."/>
            <person name="Asakawa S."/>
            <person name="Taudien S."/>
            <person name="Garber M."/>
            <person name="Kodira C.D."/>
            <person name="Schueler M.G."/>
            <person name="Shimizu A."/>
            <person name="Whittaker C.A."/>
            <person name="Chang J.L."/>
            <person name="Cuomo C.A."/>
            <person name="Dewar K."/>
            <person name="FitzGerald M.G."/>
            <person name="Yang X."/>
            <person name="Allen N.R."/>
            <person name="Anderson S."/>
            <person name="Asakawa T."/>
            <person name="Blechschmidt K."/>
            <person name="Bloom T."/>
            <person name="Borowsky M.L."/>
            <person name="Butler J."/>
            <person name="Cook A."/>
            <person name="Corum B."/>
            <person name="DeArellano K."/>
            <person name="DeCaprio D."/>
            <person name="Dooley K.T."/>
            <person name="Dorris L. III"/>
            <person name="Engels R."/>
            <person name="Gloeckner G."/>
            <person name="Hafez N."/>
            <person name="Hagopian D.S."/>
            <person name="Hall J.L."/>
            <person name="Ishikawa S.K."/>
            <person name="Jaffe D.B."/>
            <person name="Kamat A."/>
            <person name="Kudoh J."/>
            <person name="Lehmann R."/>
            <person name="Lokitsang T."/>
            <person name="Macdonald P."/>
            <person name="Major J.E."/>
            <person name="Matthews C.D."/>
            <person name="Mauceli E."/>
            <person name="Menzel U."/>
            <person name="Mihalev A.H."/>
            <person name="Minoshima S."/>
            <person name="Murayama Y."/>
            <person name="Naylor J.W."/>
            <person name="Nicol R."/>
            <person name="Nguyen C."/>
            <person name="O'Leary S.B."/>
            <person name="O'Neill K."/>
            <person name="Parker S.C.J."/>
            <person name="Polley A."/>
            <person name="Raymond C.K."/>
            <person name="Reichwald K."/>
            <person name="Rodriguez J."/>
            <person name="Sasaki T."/>
            <person name="Schilhabel M."/>
            <person name="Siddiqui R."/>
            <person name="Smith C.L."/>
            <person name="Sneddon T.P."/>
            <person name="Talamas J.A."/>
            <person name="Tenzin P."/>
            <person name="Topham K."/>
            <person name="Venkataraman V."/>
            <person name="Wen G."/>
            <person name="Yamazaki S."/>
            <person name="Young S.K."/>
            <person name="Zeng Q."/>
            <person name="Zimmer A.R."/>
            <person name="Rosenthal A."/>
            <person name="Birren B.W."/>
            <person name="Platzer M."/>
            <person name="Shimizu N."/>
            <person name="Lander E.S."/>
        </authorList>
    </citation>
    <scope>NUCLEOTIDE SEQUENCE [LARGE SCALE GENOMIC DNA]</scope>
</reference>
<reference evidence="4" key="2">
    <citation type="journal article" date="2021" name="Commun. Biol.">
        <title>Discovery of a small protein-encoding cis-regulatory overlapping gene of the tumor suppressor gene Scribble in humans.</title>
        <authorList>
            <person name="Nomura Y."/>
            <person name="Dohmae N."/>
        </authorList>
    </citation>
    <scope>IDENTIFICATION</scope>
    <scope>PROTEIN SEQUENCE OF 53-69 AND 76-93</scope>
    <scope>FUNCTION</scope>
</reference>
<proteinExistence type="evidence at protein level"/>
<gene>
    <name evidence="3" type="primary">SCRIB</name>
</gene>
<dbReference type="EMBL" id="AC105219">
    <property type="status" value="NOT_ANNOTATED_CDS"/>
    <property type="molecule type" value="Genomic_DNA"/>
</dbReference>
<dbReference type="IntAct" id="C0HLS1">
    <property type="interactions" value="310"/>
</dbReference>
<dbReference type="AGR" id="HGNC:30377"/>
<dbReference type="GeneCards" id="SCRIB"/>
<dbReference type="HGNC" id="HGNC:30377">
    <property type="gene designation" value="SCRIB"/>
</dbReference>
<dbReference type="MalaCards" id="SCRIB"/>
<dbReference type="OrthoDB" id="676979at2759"/>
<dbReference type="Proteomes" id="UP000005640">
    <property type="component" value="Unplaced"/>
</dbReference>
<dbReference type="GO" id="GO:0045947">
    <property type="term" value="P:negative regulation of translational initiation"/>
    <property type="evidence" value="ECO:0000315"/>
    <property type="project" value="UniProtKB"/>
</dbReference>
<sequence length="120" mass="11984">MRTEPRPPAPSPPSAAAGARAAHPHHAQVHPAVALQPARGVGGQAALFAAGRAGGDLPLQPQPGGAAARRQPAARAAQAFFPAAELAQAGPERQRDPAVASRGGQLHAAGGAGRVPERYP</sequence>
<feature type="chain" id="PRO_0000454656" description="SCRIB overlapping open reading frame protein">
    <location>
        <begin position="1"/>
        <end position="120"/>
    </location>
</feature>
<feature type="region of interest" description="Disordered" evidence="1">
    <location>
        <begin position="1"/>
        <end position="30"/>
    </location>
</feature>
<feature type="region of interest" description="Disordered" evidence="1">
    <location>
        <begin position="86"/>
        <end position="120"/>
    </location>
</feature>
<feature type="compositionally biased region" description="Pro residues" evidence="1">
    <location>
        <begin position="1"/>
        <end position="13"/>
    </location>
</feature>